<proteinExistence type="evidence at protein level"/>
<protein>
    <recommendedName>
        <fullName>Phosphatidate cytidylyltransferase, mitochondrial</fullName>
        <ecNumber evidence="2">2.7.7.41</ecNumber>
    </recommendedName>
    <alternativeName>
        <fullName>CDP-diacylglycerol synthase</fullName>
        <shortName>CDP-DAG synthase</shortName>
    </alternativeName>
    <alternativeName>
        <fullName>Mitochondrial translocator assembly and maintenance protein 41 homolog</fullName>
        <shortName>TAM41</shortName>
    </alternativeName>
</protein>
<reference key="1">
    <citation type="journal article" date="2004" name="Nature">
        <title>Genome sequence of the Brown Norway rat yields insights into mammalian evolution.</title>
        <authorList>
            <person name="Gibbs R.A."/>
            <person name="Weinstock G.M."/>
            <person name="Metzker M.L."/>
            <person name="Muzny D.M."/>
            <person name="Sodergren E.J."/>
            <person name="Scherer S."/>
            <person name="Scott G."/>
            <person name="Steffen D."/>
            <person name="Worley K.C."/>
            <person name="Burch P.E."/>
            <person name="Okwuonu G."/>
            <person name="Hines S."/>
            <person name="Lewis L."/>
            <person name="Deramo C."/>
            <person name="Delgado O."/>
            <person name="Dugan-Rocha S."/>
            <person name="Miner G."/>
            <person name="Morgan M."/>
            <person name="Hawes A."/>
            <person name="Gill R."/>
            <person name="Holt R.A."/>
            <person name="Adams M.D."/>
            <person name="Amanatides P.G."/>
            <person name="Baden-Tillson H."/>
            <person name="Barnstead M."/>
            <person name="Chin S."/>
            <person name="Evans C.A."/>
            <person name="Ferriera S."/>
            <person name="Fosler C."/>
            <person name="Glodek A."/>
            <person name="Gu Z."/>
            <person name="Jennings D."/>
            <person name="Kraft C.L."/>
            <person name="Nguyen T."/>
            <person name="Pfannkoch C.M."/>
            <person name="Sitter C."/>
            <person name="Sutton G.G."/>
            <person name="Venter J.C."/>
            <person name="Woodage T."/>
            <person name="Smith D."/>
            <person name="Lee H.-M."/>
            <person name="Gustafson E."/>
            <person name="Cahill P."/>
            <person name="Kana A."/>
            <person name="Doucette-Stamm L."/>
            <person name="Weinstock K."/>
            <person name="Fechtel K."/>
            <person name="Weiss R.B."/>
            <person name="Dunn D.M."/>
            <person name="Green E.D."/>
            <person name="Blakesley R.W."/>
            <person name="Bouffard G.G."/>
            <person name="De Jong P.J."/>
            <person name="Osoegawa K."/>
            <person name="Zhu B."/>
            <person name="Marra M."/>
            <person name="Schein J."/>
            <person name="Bosdet I."/>
            <person name="Fjell C."/>
            <person name="Jones S."/>
            <person name="Krzywinski M."/>
            <person name="Mathewson C."/>
            <person name="Siddiqui A."/>
            <person name="Wye N."/>
            <person name="McPherson J."/>
            <person name="Zhao S."/>
            <person name="Fraser C.M."/>
            <person name="Shetty J."/>
            <person name="Shatsman S."/>
            <person name="Geer K."/>
            <person name="Chen Y."/>
            <person name="Abramzon S."/>
            <person name="Nierman W.C."/>
            <person name="Havlak P.H."/>
            <person name="Chen R."/>
            <person name="Durbin K.J."/>
            <person name="Egan A."/>
            <person name="Ren Y."/>
            <person name="Song X.-Z."/>
            <person name="Li B."/>
            <person name="Liu Y."/>
            <person name="Qin X."/>
            <person name="Cawley S."/>
            <person name="Cooney A.J."/>
            <person name="D'Souza L.M."/>
            <person name="Martin K."/>
            <person name="Wu J.Q."/>
            <person name="Gonzalez-Garay M.L."/>
            <person name="Jackson A.R."/>
            <person name="Kalafus K.J."/>
            <person name="McLeod M.P."/>
            <person name="Milosavljevic A."/>
            <person name="Virk D."/>
            <person name="Volkov A."/>
            <person name="Wheeler D.A."/>
            <person name="Zhang Z."/>
            <person name="Bailey J.A."/>
            <person name="Eichler E.E."/>
            <person name="Tuzun E."/>
            <person name="Birney E."/>
            <person name="Mongin E."/>
            <person name="Ureta-Vidal A."/>
            <person name="Woodwark C."/>
            <person name="Zdobnov E."/>
            <person name="Bork P."/>
            <person name="Suyama M."/>
            <person name="Torrents D."/>
            <person name="Alexandersson M."/>
            <person name="Trask B.J."/>
            <person name="Young J.M."/>
            <person name="Huang H."/>
            <person name="Wang H."/>
            <person name="Xing H."/>
            <person name="Daniels S."/>
            <person name="Gietzen D."/>
            <person name="Schmidt J."/>
            <person name="Stevens K."/>
            <person name="Vitt U."/>
            <person name="Wingrove J."/>
            <person name="Camara F."/>
            <person name="Mar Alba M."/>
            <person name="Abril J.F."/>
            <person name="Guigo R."/>
            <person name="Smit A."/>
            <person name="Dubchak I."/>
            <person name="Rubin E.M."/>
            <person name="Couronne O."/>
            <person name="Poliakov A."/>
            <person name="Huebner N."/>
            <person name="Ganten D."/>
            <person name="Goesele C."/>
            <person name="Hummel O."/>
            <person name="Kreitler T."/>
            <person name="Lee Y.-A."/>
            <person name="Monti J."/>
            <person name="Schulz H."/>
            <person name="Zimdahl H."/>
            <person name="Himmelbauer H."/>
            <person name="Lehrach H."/>
            <person name="Jacob H.J."/>
            <person name="Bromberg S."/>
            <person name="Gullings-Handley J."/>
            <person name="Jensen-Seaman M.I."/>
            <person name="Kwitek A.E."/>
            <person name="Lazar J."/>
            <person name="Pasko D."/>
            <person name="Tonellato P.J."/>
            <person name="Twigger S."/>
            <person name="Ponting C.P."/>
            <person name="Duarte J.M."/>
            <person name="Rice S."/>
            <person name="Goodstadt L."/>
            <person name="Beatson S.A."/>
            <person name="Emes R.D."/>
            <person name="Winter E.E."/>
            <person name="Webber C."/>
            <person name="Brandt P."/>
            <person name="Nyakatura G."/>
            <person name="Adetobi M."/>
            <person name="Chiaromonte F."/>
            <person name="Elnitski L."/>
            <person name="Eswara P."/>
            <person name="Hardison R.C."/>
            <person name="Hou M."/>
            <person name="Kolbe D."/>
            <person name="Makova K."/>
            <person name="Miller W."/>
            <person name="Nekrutenko A."/>
            <person name="Riemer C."/>
            <person name="Schwartz S."/>
            <person name="Taylor J."/>
            <person name="Yang S."/>
            <person name="Zhang Y."/>
            <person name="Lindpaintner K."/>
            <person name="Andrews T.D."/>
            <person name="Caccamo M."/>
            <person name="Clamp M."/>
            <person name="Clarke L."/>
            <person name="Curwen V."/>
            <person name="Durbin R.M."/>
            <person name="Eyras E."/>
            <person name="Searle S.M."/>
            <person name="Cooper G.M."/>
            <person name="Batzoglou S."/>
            <person name="Brudno M."/>
            <person name="Sidow A."/>
            <person name="Stone E.A."/>
            <person name="Payseur B.A."/>
            <person name="Bourque G."/>
            <person name="Lopez-Otin C."/>
            <person name="Puente X.S."/>
            <person name="Chakrabarti K."/>
            <person name="Chatterji S."/>
            <person name="Dewey C."/>
            <person name="Pachter L."/>
            <person name="Bray N."/>
            <person name="Yap V.B."/>
            <person name="Caspi A."/>
            <person name="Tesler G."/>
            <person name="Pevzner P.A."/>
            <person name="Haussler D."/>
            <person name="Roskin K.M."/>
            <person name="Baertsch R."/>
            <person name="Clawson H."/>
            <person name="Furey T.S."/>
            <person name="Hinrichs A.S."/>
            <person name="Karolchik D."/>
            <person name="Kent W.J."/>
            <person name="Rosenbloom K.R."/>
            <person name="Trumbower H."/>
            <person name="Weirauch M."/>
            <person name="Cooper D.N."/>
            <person name="Stenson P.D."/>
            <person name="Ma B."/>
            <person name="Brent M."/>
            <person name="Arumugam M."/>
            <person name="Shteynberg D."/>
            <person name="Copley R.R."/>
            <person name="Taylor M.S."/>
            <person name="Riethman H."/>
            <person name="Mudunuri U."/>
            <person name="Peterson J."/>
            <person name="Guyer M."/>
            <person name="Felsenfeld A."/>
            <person name="Old S."/>
            <person name="Mockrin S."/>
            <person name="Collins F.S."/>
        </authorList>
    </citation>
    <scope>NUCLEOTIDE SEQUENCE [LARGE SCALE GENOMIC DNA]</scope>
    <source>
        <strain>Brown Norway</strain>
    </source>
</reference>
<reference key="2">
    <citation type="submission" date="2005-09" db="EMBL/GenBank/DDBJ databases">
        <authorList>
            <person name="Mural R.J."/>
            <person name="Adams M.D."/>
            <person name="Myers E.W."/>
            <person name="Smith H.O."/>
            <person name="Venter J.C."/>
        </authorList>
    </citation>
    <scope>NUCLEOTIDE SEQUENCE [LARGE SCALE GENOMIC DNA]</scope>
    <source>
        <strain>Brown Norway</strain>
    </source>
</reference>
<reference key="3">
    <citation type="journal article" date="2018" name="Biochim. Biophys. Acta">
        <title>Mitochondrial CDP-diacylglycerol synthase activity is due to the peripheral protein, TAMM41 and not due to the integral membrane protein, CDP-diacylglycerol synthase 1.</title>
        <authorList>
            <person name="Blunsom N.J."/>
            <person name="Gomez-Espinosa E."/>
            <person name="Ashlin T.G."/>
            <person name="Cockcroft S."/>
        </authorList>
    </citation>
    <scope>FUNCTION</scope>
    <scope>CATALYTIC ACTIVITY</scope>
    <scope>SUBCELLULAR LOCATION</scope>
    <scope>TISSUE SPECIFICITY</scope>
    <scope>PATHWAY</scope>
</reference>
<sequence length="337" mass="37786">MALQALHSSGVGLRRILAHFPEDLSLAFAYGSAVYRQAGPSAHQENPMLDLVFTVDDPVAWHAMNLKKNWSHYSLLKLLGPRIISSVQNNYGAGVYFNPLIMCDGKLIKYGVISTGTLIEDLLNWNNLYIAGRLQKPVKIVSMNESTVLRAALDKNLKSAVTTACLMLPESFSEEDLFIEIAGLSYSGDFRMVIGEEKAKVLNIVKPNVVHFRELYESILQKDPQMVYKMHQGQLEIDKSPEGQFTQLMTLPRTLQQHINHIMDPPGRNRDVEETLLQVAQDPDCGDVVRLAVSSIVRPSSIRQSTKGLFTAGVKKSVIYSSRKLNKMWKGWVRKTS</sequence>
<keyword id="KW-0444">Lipid biosynthesis</keyword>
<keyword id="KW-0443">Lipid metabolism</keyword>
<keyword id="KW-0460">Magnesium</keyword>
<keyword id="KW-0472">Membrane</keyword>
<keyword id="KW-0496">Mitochondrion</keyword>
<keyword id="KW-0999">Mitochondrion inner membrane</keyword>
<keyword id="KW-0548">Nucleotidyltransferase</keyword>
<keyword id="KW-0594">Phospholipid biosynthesis</keyword>
<keyword id="KW-1208">Phospholipid metabolism</keyword>
<keyword id="KW-1185">Reference proteome</keyword>
<keyword id="KW-0808">Transferase</keyword>
<evidence type="ECO:0000250" key="1">
    <source>
        <dbReference type="UniProtKB" id="P53230"/>
    </source>
</evidence>
<evidence type="ECO:0000269" key="2">
    <source>
    </source>
</evidence>
<evidence type="ECO:0000305" key="3"/>
<evidence type="ECO:0000305" key="4">
    <source>
    </source>
</evidence>
<comment type="function">
    <text evidence="2">Catalyzes the conversion of phosphatidic acid (PA) to CDP-diacylglycerol (CDP-DAG), an essential intermediate in the synthesis of phosphatidylglycerol, cardiolipin and phosphatidylinositol.</text>
</comment>
<comment type="catalytic activity">
    <reaction evidence="2">
        <text>a 1,2-diacyl-sn-glycero-3-phosphate + CTP + H(+) = a CDP-1,2-diacyl-sn-glycerol + diphosphate</text>
        <dbReference type="Rhea" id="RHEA:16229"/>
        <dbReference type="ChEBI" id="CHEBI:15378"/>
        <dbReference type="ChEBI" id="CHEBI:33019"/>
        <dbReference type="ChEBI" id="CHEBI:37563"/>
        <dbReference type="ChEBI" id="CHEBI:58332"/>
        <dbReference type="ChEBI" id="CHEBI:58608"/>
        <dbReference type="EC" id="2.7.7.41"/>
    </reaction>
    <physiologicalReaction direction="left-to-right" evidence="4">
        <dbReference type="Rhea" id="RHEA:16230"/>
    </physiologicalReaction>
</comment>
<comment type="cofactor">
    <cofactor evidence="1">
        <name>Mg(2+)</name>
        <dbReference type="ChEBI" id="CHEBI:18420"/>
    </cofactor>
</comment>
<comment type="pathway">
    <text evidence="4">Phospholipid metabolism; CDP-diacylglycerol biosynthesis; CDP-diacylglycerol from sn-glycerol 3-phosphate: step 3/3.</text>
</comment>
<comment type="subcellular location">
    <subcellularLocation>
        <location evidence="2">Mitochondrion inner membrane</location>
        <topology evidence="2">Peripheral membrane protein</topology>
        <orientation evidence="1">Matrix side</orientation>
    </subcellularLocation>
</comment>
<comment type="tissue specificity">
    <text evidence="2">Brain and liver.</text>
</comment>
<comment type="similarity">
    <text evidence="3">Belongs to the TAM41 family.</text>
</comment>
<dbReference type="EC" id="2.7.7.41" evidence="2"/>
<dbReference type="EMBL" id="AABR07073059">
    <property type="status" value="NOT_ANNOTATED_CDS"/>
    <property type="molecule type" value="Genomic_DNA"/>
</dbReference>
<dbReference type="EMBL" id="CH473964">
    <property type="protein sequence ID" value="EDM02163.1"/>
    <property type="molecule type" value="Genomic_DNA"/>
</dbReference>
<dbReference type="RefSeq" id="NP_001102112.1">
    <property type="nucleotide sequence ID" value="NM_001108642.1"/>
</dbReference>
<dbReference type="SMR" id="D3ZKT0"/>
<dbReference type="FunCoup" id="D3ZKT0">
    <property type="interactions" value="1722"/>
</dbReference>
<dbReference type="STRING" id="10116.ENSRNOP00000010397"/>
<dbReference type="SwissLipids" id="SLP:000001894"/>
<dbReference type="PhosphoSitePlus" id="D3ZKT0"/>
<dbReference type="jPOST" id="D3ZKT0"/>
<dbReference type="PaxDb" id="10116-ENSRNOP00000010397"/>
<dbReference type="PeptideAtlas" id="D3ZKT0"/>
<dbReference type="Ensembl" id="ENSRNOT00000010397.6">
    <property type="protein sequence ID" value="ENSRNOP00000010397.4"/>
    <property type="gene ID" value="ENSRNOG00000007874.6"/>
</dbReference>
<dbReference type="GeneID" id="362419"/>
<dbReference type="KEGG" id="rno:362419"/>
<dbReference type="UCSC" id="RGD:1586150">
    <property type="organism name" value="rat"/>
</dbReference>
<dbReference type="AGR" id="RGD:1586150"/>
<dbReference type="CTD" id="132001"/>
<dbReference type="RGD" id="1586150">
    <property type="gene designation" value="Tamm41"/>
</dbReference>
<dbReference type="eggNOG" id="KOG2986">
    <property type="taxonomic scope" value="Eukaryota"/>
</dbReference>
<dbReference type="GeneTree" id="ENSGT00390000000616"/>
<dbReference type="HOGENOM" id="CLU_030279_1_2_1"/>
<dbReference type="InParanoid" id="D3ZKT0"/>
<dbReference type="OMA" id="HAENMHR"/>
<dbReference type="PhylomeDB" id="D3ZKT0"/>
<dbReference type="TreeFam" id="TF314503"/>
<dbReference type="BRENDA" id="2.7.7.41">
    <property type="organism ID" value="5301"/>
</dbReference>
<dbReference type="UniPathway" id="UPA00557">
    <property type="reaction ID" value="UER00614"/>
</dbReference>
<dbReference type="PRO" id="PR:D3ZKT0"/>
<dbReference type="Proteomes" id="UP000002494">
    <property type="component" value="Chromosome 4"/>
</dbReference>
<dbReference type="Proteomes" id="UP000234681">
    <property type="component" value="Chromosome 4"/>
</dbReference>
<dbReference type="Bgee" id="ENSRNOG00000007874">
    <property type="expression patterns" value="Expressed in duodenum and 19 other cell types or tissues"/>
</dbReference>
<dbReference type="GO" id="GO:0005743">
    <property type="term" value="C:mitochondrial inner membrane"/>
    <property type="evidence" value="ECO:0000314"/>
    <property type="project" value="UniProtKB"/>
</dbReference>
<dbReference type="GO" id="GO:0005739">
    <property type="term" value="C:mitochondrion"/>
    <property type="evidence" value="ECO:0000266"/>
    <property type="project" value="RGD"/>
</dbReference>
<dbReference type="GO" id="GO:0004605">
    <property type="term" value="F:phosphatidate cytidylyltransferase activity"/>
    <property type="evidence" value="ECO:0000314"/>
    <property type="project" value="UniProtKB"/>
</dbReference>
<dbReference type="GO" id="GO:0032049">
    <property type="term" value="P:cardiolipin biosynthetic process"/>
    <property type="evidence" value="ECO:0000318"/>
    <property type="project" value="GO_Central"/>
</dbReference>
<dbReference type="GO" id="GO:0016024">
    <property type="term" value="P:CDP-diacylglycerol biosynthetic process"/>
    <property type="evidence" value="ECO:0000318"/>
    <property type="project" value="GO_Central"/>
</dbReference>
<dbReference type="InterPro" id="IPR015222">
    <property type="entry name" value="Tam41"/>
</dbReference>
<dbReference type="PANTHER" id="PTHR13619">
    <property type="entry name" value="PHOSPHATIDATE CYTIDYLYLTRANSFERASE, MITOCHONDRIAL"/>
    <property type="match status" value="1"/>
</dbReference>
<dbReference type="PANTHER" id="PTHR13619:SF0">
    <property type="entry name" value="PHOSPHATIDATE CYTIDYLYLTRANSFERASE, MITOCHONDRIAL"/>
    <property type="match status" value="1"/>
</dbReference>
<dbReference type="Pfam" id="PF09139">
    <property type="entry name" value="Tam41_Mmp37"/>
    <property type="match status" value="1"/>
</dbReference>
<dbReference type="PIRSF" id="PIRSF028840">
    <property type="entry name" value="Mmp37"/>
    <property type="match status" value="1"/>
</dbReference>
<name>TAM41_RAT</name>
<feature type="chain" id="PRO_0000449324" description="Phosphatidate cytidylyltransferase, mitochondrial">
    <location>
        <begin position="1"/>
        <end position="337"/>
    </location>
</feature>
<accession>D3ZKT0</accession>
<gene>
    <name type="primary">Tamm41</name>
</gene>
<organism>
    <name type="scientific">Rattus norvegicus</name>
    <name type="common">Rat</name>
    <dbReference type="NCBI Taxonomy" id="10116"/>
    <lineage>
        <taxon>Eukaryota</taxon>
        <taxon>Metazoa</taxon>
        <taxon>Chordata</taxon>
        <taxon>Craniata</taxon>
        <taxon>Vertebrata</taxon>
        <taxon>Euteleostomi</taxon>
        <taxon>Mammalia</taxon>
        <taxon>Eutheria</taxon>
        <taxon>Euarchontoglires</taxon>
        <taxon>Glires</taxon>
        <taxon>Rodentia</taxon>
        <taxon>Myomorpha</taxon>
        <taxon>Muroidea</taxon>
        <taxon>Muridae</taxon>
        <taxon>Murinae</taxon>
        <taxon>Rattus</taxon>
    </lineage>
</organism>